<sequence>MYNCPYCGKDCVNEAAVNIYLKMVEKFFKYQNKGSDITFEKYPTVGEVGECKETGGRIYLCPYCKKPFKAYYEKDKVVITCPNCGETLCLPATNRTFC</sequence>
<proteinExistence type="predicted"/>
<gene>
    <name type="ordered locus">MJ0481</name>
</gene>
<protein>
    <recommendedName>
        <fullName>Uncharacterized protein MJ0481</fullName>
    </recommendedName>
</protein>
<name>Y481_METJA</name>
<reference key="1">
    <citation type="journal article" date="1996" name="Science">
        <title>Complete genome sequence of the methanogenic archaeon, Methanococcus jannaschii.</title>
        <authorList>
            <person name="Bult C.J."/>
            <person name="White O."/>
            <person name="Olsen G.J."/>
            <person name="Zhou L."/>
            <person name="Fleischmann R.D."/>
            <person name="Sutton G.G."/>
            <person name="Blake J.A."/>
            <person name="FitzGerald L.M."/>
            <person name="Clayton R.A."/>
            <person name="Gocayne J.D."/>
            <person name="Kerlavage A.R."/>
            <person name="Dougherty B.A."/>
            <person name="Tomb J.-F."/>
            <person name="Adams M.D."/>
            <person name="Reich C.I."/>
            <person name="Overbeek R."/>
            <person name="Kirkness E.F."/>
            <person name="Weinstock K.G."/>
            <person name="Merrick J.M."/>
            <person name="Glodek A."/>
            <person name="Scott J.L."/>
            <person name="Geoghagen N.S.M."/>
            <person name="Weidman J.F."/>
            <person name="Fuhrmann J.L."/>
            <person name="Nguyen D."/>
            <person name="Utterback T.R."/>
            <person name="Kelley J.M."/>
            <person name="Peterson J.D."/>
            <person name="Sadow P.W."/>
            <person name="Hanna M.C."/>
            <person name="Cotton M.D."/>
            <person name="Roberts K.M."/>
            <person name="Hurst M.A."/>
            <person name="Kaine B.P."/>
            <person name="Borodovsky M."/>
            <person name="Klenk H.-P."/>
            <person name="Fraser C.M."/>
            <person name="Smith H.O."/>
            <person name="Woese C.R."/>
            <person name="Venter J.C."/>
        </authorList>
    </citation>
    <scope>NUCLEOTIDE SEQUENCE [LARGE SCALE GENOMIC DNA]</scope>
    <source>
        <strain>ATCC 43067 / DSM 2661 / JAL-1 / JCM 10045 / NBRC 100440</strain>
    </source>
</reference>
<organism>
    <name type="scientific">Methanocaldococcus jannaschii (strain ATCC 43067 / DSM 2661 / JAL-1 / JCM 10045 / NBRC 100440)</name>
    <name type="common">Methanococcus jannaschii</name>
    <dbReference type="NCBI Taxonomy" id="243232"/>
    <lineage>
        <taxon>Archaea</taxon>
        <taxon>Methanobacteriati</taxon>
        <taxon>Methanobacteriota</taxon>
        <taxon>Methanomada group</taxon>
        <taxon>Methanococci</taxon>
        <taxon>Methanococcales</taxon>
        <taxon>Methanocaldococcaceae</taxon>
        <taxon>Methanocaldococcus</taxon>
    </lineage>
</organism>
<feature type="chain" id="PRO_0000106889" description="Uncharacterized protein MJ0481">
    <location>
        <begin position="1"/>
        <end position="98"/>
    </location>
</feature>
<keyword id="KW-1185">Reference proteome</keyword>
<dbReference type="EMBL" id="L77117">
    <property type="protein sequence ID" value="AAB98472.1"/>
    <property type="molecule type" value="Genomic_DNA"/>
</dbReference>
<dbReference type="PIR" id="B64360">
    <property type="entry name" value="B64360"/>
</dbReference>
<dbReference type="RefSeq" id="WP_010869983.1">
    <property type="nucleotide sequence ID" value="NC_000909.1"/>
</dbReference>
<dbReference type="FunCoup" id="Q57906">
    <property type="interactions" value="3"/>
</dbReference>
<dbReference type="PaxDb" id="243232-MJ_0481"/>
<dbReference type="EnsemblBacteria" id="AAB98472">
    <property type="protein sequence ID" value="AAB98472"/>
    <property type="gene ID" value="MJ_0481"/>
</dbReference>
<dbReference type="GeneID" id="1451344"/>
<dbReference type="KEGG" id="mja:MJ_0481"/>
<dbReference type="eggNOG" id="arCOG05031">
    <property type="taxonomic scope" value="Archaea"/>
</dbReference>
<dbReference type="HOGENOM" id="CLU_2340193_0_0_2"/>
<dbReference type="InParanoid" id="Q57906"/>
<dbReference type="OrthoDB" id="63159at2157"/>
<dbReference type="Proteomes" id="UP000000805">
    <property type="component" value="Chromosome"/>
</dbReference>
<accession>Q57906</accession>